<name>NOC4L_CHICK</name>
<protein>
    <recommendedName>
        <fullName>Nucleolar complex protein 4 homolog</fullName>
        <shortName>NOC4 protein homolog</shortName>
    </recommendedName>
    <alternativeName>
        <fullName>NOC4-like protein</fullName>
    </alternativeName>
    <alternativeName>
        <fullName>Nucleolar complex-associated protein 4-like protein</fullName>
    </alternativeName>
</protein>
<feature type="chain" id="PRO_0000173487" description="Nucleolar complex protein 4 homolog">
    <location>
        <begin position="1"/>
        <end position="508"/>
    </location>
</feature>
<feature type="transmembrane region" description="Helical" evidence="2">
    <location>
        <begin position="288"/>
        <end position="308"/>
    </location>
</feature>
<feature type="transmembrane region" description="Helical" evidence="2">
    <location>
        <begin position="341"/>
        <end position="361"/>
    </location>
</feature>
<feature type="transmembrane region" description="Helical" evidence="2">
    <location>
        <begin position="367"/>
        <end position="387"/>
    </location>
</feature>
<keyword id="KW-0472">Membrane</keyword>
<keyword id="KW-0539">Nucleus</keyword>
<keyword id="KW-1185">Reference proteome</keyword>
<keyword id="KW-0812">Transmembrane</keyword>
<keyword id="KW-1133">Transmembrane helix</keyword>
<sequence length="508" mass="58292">MARPALAASLEAVLGDRGNANRVFEILELLAAKEEEDVLCAARTCRRLFAALLRRGELFAGSLPAEEDALRGNYSAEEKYKIWMRHRYNDCVESLSELLGHDSFQVKESSLCTLMKFVELEAECPLVAEQWKGSIAFPRHLLKVVVNGLIPIHEDASLLISRFQEYMEYEDVRYFVMKVVTESIGQVMQKIKERPLPFYQQNVFSLISPINMPNKERDMVKFMMKQDNREEWKVSKLQAHKQAFERMWLTFLKHQLPSGLYKKVLVILHDSILPYMNEPTLMIDFLTVAYGVGGAISLLALNGLFILIHQHNLEYPDFYKKLYSLLDPSIYHVKYRARFFHLADLFLSSSHLPAYLVAAFIKRLSRLALTAPPEALLMVIPFICNLFRRHPACKVLMHRPNGPQDLSEDPYIMEQEEPSESRALESSLWELQSLQNHYHPDVAQAAAILNQSLSEIEDDISGLLELSASELFDKEIKKTSANVPLEFEQVRGLFGKKNDIIAEHFALD</sequence>
<gene>
    <name type="primary">NOC4L</name>
    <name type="ORF">RCJMB04_19e8</name>
</gene>
<proteinExistence type="evidence at transcript level"/>
<reference key="1">
    <citation type="journal article" date="2005" name="Genome Biol.">
        <title>Full-length cDNAs from chicken bursal lymphocytes to facilitate gene function analysis.</title>
        <authorList>
            <person name="Caldwell R.B."/>
            <person name="Kierzek A.M."/>
            <person name="Arakawa H."/>
            <person name="Bezzubov Y."/>
            <person name="Zaim J."/>
            <person name="Fiedler P."/>
            <person name="Kutter S."/>
            <person name="Blagodatski A."/>
            <person name="Kostovska D."/>
            <person name="Koter M."/>
            <person name="Plachy J."/>
            <person name="Carninci P."/>
            <person name="Hayashizaki Y."/>
            <person name="Buerstedde J.-M."/>
        </authorList>
    </citation>
    <scope>NUCLEOTIDE SEQUENCE [LARGE SCALE MRNA]</scope>
    <source>
        <strain>CB</strain>
        <tissue>Bursa of Fabricius</tissue>
    </source>
</reference>
<dbReference type="EMBL" id="AJ720507">
    <property type="protein sequence ID" value="CAG32166.1"/>
    <property type="molecule type" value="mRNA"/>
</dbReference>
<dbReference type="RefSeq" id="NP_001025826.1">
    <property type="nucleotide sequence ID" value="NM_001030655.2"/>
</dbReference>
<dbReference type="SMR" id="Q5ZJC7"/>
<dbReference type="FunCoup" id="Q5ZJC7">
    <property type="interactions" value="1487"/>
</dbReference>
<dbReference type="STRING" id="9031.ENSGALP00000003557"/>
<dbReference type="PaxDb" id="9031-ENSGALP00000003557"/>
<dbReference type="GeneID" id="416798"/>
<dbReference type="KEGG" id="gga:416798"/>
<dbReference type="CTD" id="79050"/>
<dbReference type="VEuPathDB" id="HostDB:geneid_416798"/>
<dbReference type="eggNOG" id="KOG2154">
    <property type="taxonomic scope" value="Eukaryota"/>
</dbReference>
<dbReference type="InParanoid" id="Q5ZJC7"/>
<dbReference type="OrthoDB" id="10263185at2759"/>
<dbReference type="PhylomeDB" id="Q5ZJC7"/>
<dbReference type="PRO" id="PR:Q5ZJC7"/>
<dbReference type="Proteomes" id="UP000000539">
    <property type="component" value="Unassembled WGS sequence"/>
</dbReference>
<dbReference type="GO" id="GO:0030692">
    <property type="term" value="C:Noc4p-Nop14p complex"/>
    <property type="evidence" value="ECO:0000318"/>
    <property type="project" value="GO_Central"/>
</dbReference>
<dbReference type="GO" id="GO:0031965">
    <property type="term" value="C:nuclear membrane"/>
    <property type="evidence" value="ECO:0007669"/>
    <property type="project" value="UniProtKB-SubCell"/>
</dbReference>
<dbReference type="GO" id="GO:0005730">
    <property type="term" value="C:nucleolus"/>
    <property type="evidence" value="ECO:0000318"/>
    <property type="project" value="GO_Central"/>
</dbReference>
<dbReference type="GO" id="GO:0032040">
    <property type="term" value="C:small-subunit processome"/>
    <property type="evidence" value="ECO:0000318"/>
    <property type="project" value="GO_Central"/>
</dbReference>
<dbReference type="GO" id="GO:0042254">
    <property type="term" value="P:ribosome biogenesis"/>
    <property type="evidence" value="ECO:0007669"/>
    <property type="project" value="InterPro"/>
</dbReference>
<dbReference type="InterPro" id="IPR016024">
    <property type="entry name" value="ARM-type_fold"/>
</dbReference>
<dbReference type="InterPro" id="IPR005612">
    <property type="entry name" value="CCAAT-binding_factor"/>
</dbReference>
<dbReference type="InterPro" id="IPR027193">
    <property type="entry name" value="Noc4"/>
</dbReference>
<dbReference type="PANTHER" id="PTHR12455">
    <property type="entry name" value="NUCLEOLAR COMPLEX PROTEIN 4"/>
    <property type="match status" value="1"/>
</dbReference>
<dbReference type="PANTHER" id="PTHR12455:SF0">
    <property type="entry name" value="NUCLEOLAR COMPLEX PROTEIN 4 HOMOLOG"/>
    <property type="match status" value="1"/>
</dbReference>
<dbReference type="Pfam" id="PF03914">
    <property type="entry name" value="CBF"/>
    <property type="match status" value="1"/>
</dbReference>
<dbReference type="SUPFAM" id="SSF48371">
    <property type="entry name" value="ARM repeat"/>
    <property type="match status" value="1"/>
</dbReference>
<comment type="subcellular location">
    <subcellularLocation>
        <location evidence="1">Nucleus membrane</location>
        <topology evidence="2">Multi-pass membrane protein</topology>
    </subcellularLocation>
    <subcellularLocation>
        <location evidence="1">Nucleus</location>
        <location evidence="1">Nucleolus</location>
    </subcellularLocation>
</comment>
<comment type="similarity">
    <text evidence="3">Belongs to the CBF/MAK21 family.</text>
</comment>
<organism>
    <name type="scientific">Gallus gallus</name>
    <name type="common">Chicken</name>
    <dbReference type="NCBI Taxonomy" id="9031"/>
    <lineage>
        <taxon>Eukaryota</taxon>
        <taxon>Metazoa</taxon>
        <taxon>Chordata</taxon>
        <taxon>Craniata</taxon>
        <taxon>Vertebrata</taxon>
        <taxon>Euteleostomi</taxon>
        <taxon>Archelosauria</taxon>
        <taxon>Archosauria</taxon>
        <taxon>Dinosauria</taxon>
        <taxon>Saurischia</taxon>
        <taxon>Theropoda</taxon>
        <taxon>Coelurosauria</taxon>
        <taxon>Aves</taxon>
        <taxon>Neognathae</taxon>
        <taxon>Galloanserae</taxon>
        <taxon>Galliformes</taxon>
        <taxon>Phasianidae</taxon>
        <taxon>Phasianinae</taxon>
        <taxon>Gallus</taxon>
    </lineage>
</organism>
<evidence type="ECO:0000250" key="1">
    <source>
        <dbReference type="UniProtKB" id="Q9BVI4"/>
    </source>
</evidence>
<evidence type="ECO:0000255" key="2"/>
<evidence type="ECO:0000305" key="3"/>
<accession>Q5ZJC7</accession>